<proteinExistence type="evidence at protein level"/>
<reference key="1">
    <citation type="journal article" date="1999" name="Cytogenet. Cell Genet.">
        <title>TBL2, a novel transducin family member in the WBS deletion: characterization of the complete sequence, genomic structure, transcriptional variants and the mouse ortholog.</title>
        <authorList>
            <person name="Perez Jurado L.A."/>
            <person name="Wang Y.-K."/>
            <person name="Francke U."/>
            <person name="Cruces J."/>
        </authorList>
    </citation>
    <scope>NUCLEOTIDE SEQUENCE [MRNA]</scope>
</reference>
<reference key="2">
    <citation type="journal article" date="2005" name="Science">
        <title>The transcriptional landscape of the mammalian genome.</title>
        <authorList>
            <person name="Carninci P."/>
            <person name="Kasukawa T."/>
            <person name="Katayama S."/>
            <person name="Gough J."/>
            <person name="Frith M.C."/>
            <person name="Maeda N."/>
            <person name="Oyama R."/>
            <person name="Ravasi T."/>
            <person name="Lenhard B."/>
            <person name="Wells C."/>
            <person name="Kodzius R."/>
            <person name="Shimokawa K."/>
            <person name="Bajic V.B."/>
            <person name="Brenner S.E."/>
            <person name="Batalov S."/>
            <person name="Forrest A.R."/>
            <person name="Zavolan M."/>
            <person name="Davis M.J."/>
            <person name="Wilming L.G."/>
            <person name="Aidinis V."/>
            <person name="Allen J.E."/>
            <person name="Ambesi-Impiombato A."/>
            <person name="Apweiler R."/>
            <person name="Aturaliya R.N."/>
            <person name="Bailey T.L."/>
            <person name="Bansal M."/>
            <person name="Baxter L."/>
            <person name="Beisel K.W."/>
            <person name="Bersano T."/>
            <person name="Bono H."/>
            <person name="Chalk A.M."/>
            <person name="Chiu K.P."/>
            <person name="Choudhary V."/>
            <person name="Christoffels A."/>
            <person name="Clutterbuck D.R."/>
            <person name="Crowe M.L."/>
            <person name="Dalla E."/>
            <person name="Dalrymple B.P."/>
            <person name="de Bono B."/>
            <person name="Della Gatta G."/>
            <person name="di Bernardo D."/>
            <person name="Down T."/>
            <person name="Engstrom P."/>
            <person name="Fagiolini M."/>
            <person name="Faulkner G."/>
            <person name="Fletcher C.F."/>
            <person name="Fukushima T."/>
            <person name="Furuno M."/>
            <person name="Futaki S."/>
            <person name="Gariboldi M."/>
            <person name="Georgii-Hemming P."/>
            <person name="Gingeras T.R."/>
            <person name="Gojobori T."/>
            <person name="Green R.E."/>
            <person name="Gustincich S."/>
            <person name="Harbers M."/>
            <person name="Hayashi Y."/>
            <person name="Hensch T.K."/>
            <person name="Hirokawa N."/>
            <person name="Hill D."/>
            <person name="Huminiecki L."/>
            <person name="Iacono M."/>
            <person name="Ikeo K."/>
            <person name="Iwama A."/>
            <person name="Ishikawa T."/>
            <person name="Jakt M."/>
            <person name="Kanapin A."/>
            <person name="Katoh M."/>
            <person name="Kawasawa Y."/>
            <person name="Kelso J."/>
            <person name="Kitamura H."/>
            <person name="Kitano H."/>
            <person name="Kollias G."/>
            <person name="Krishnan S.P."/>
            <person name="Kruger A."/>
            <person name="Kummerfeld S.K."/>
            <person name="Kurochkin I.V."/>
            <person name="Lareau L.F."/>
            <person name="Lazarevic D."/>
            <person name="Lipovich L."/>
            <person name="Liu J."/>
            <person name="Liuni S."/>
            <person name="McWilliam S."/>
            <person name="Madan Babu M."/>
            <person name="Madera M."/>
            <person name="Marchionni L."/>
            <person name="Matsuda H."/>
            <person name="Matsuzawa S."/>
            <person name="Miki H."/>
            <person name="Mignone F."/>
            <person name="Miyake S."/>
            <person name="Morris K."/>
            <person name="Mottagui-Tabar S."/>
            <person name="Mulder N."/>
            <person name="Nakano N."/>
            <person name="Nakauchi H."/>
            <person name="Ng P."/>
            <person name="Nilsson R."/>
            <person name="Nishiguchi S."/>
            <person name="Nishikawa S."/>
            <person name="Nori F."/>
            <person name="Ohara O."/>
            <person name="Okazaki Y."/>
            <person name="Orlando V."/>
            <person name="Pang K.C."/>
            <person name="Pavan W.J."/>
            <person name="Pavesi G."/>
            <person name="Pesole G."/>
            <person name="Petrovsky N."/>
            <person name="Piazza S."/>
            <person name="Reed J."/>
            <person name="Reid J.F."/>
            <person name="Ring B.Z."/>
            <person name="Ringwald M."/>
            <person name="Rost B."/>
            <person name="Ruan Y."/>
            <person name="Salzberg S.L."/>
            <person name="Sandelin A."/>
            <person name="Schneider C."/>
            <person name="Schoenbach C."/>
            <person name="Sekiguchi K."/>
            <person name="Semple C.A."/>
            <person name="Seno S."/>
            <person name="Sessa L."/>
            <person name="Sheng Y."/>
            <person name="Shibata Y."/>
            <person name="Shimada H."/>
            <person name="Shimada K."/>
            <person name="Silva D."/>
            <person name="Sinclair B."/>
            <person name="Sperling S."/>
            <person name="Stupka E."/>
            <person name="Sugiura K."/>
            <person name="Sultana R."/>
            <person name="Takenaka Y."/>
            <person name="Taki K."/>
            <person name="Tammoja K."/>
            <person name="Tan S.L."/>
            <person name="Tang S."/>
            <person name="Taylor M.S."/>
            <person name="Tegner J."/>
            <person name="Teichmann S.A."/>
            <person name="Ueda H.R."/>
            <person name="van Nimwegen E."/>
            <person name="Verardo R."/>
            <person name="Wei C.L."/>
            <person name="Yagi K."/>
            <person name="Yamanishi H."/>
            <person name="Zabarovsky E."/>
            <person name="Zhu S."/>
            <person name="Zimmer A."/>
            <person name="Hide W."/>
            <person name="Bult C."/>
            <person name="Grimmond S.M."/>
            <person name="Teasdale R.D."/>
            <person name="Liu E.T."/>
            <person name="Brusic V."/>
            <person name="Quackenbush J."/>
            <person name="Wahlestedt C."/>
            <person name="Mattick J.S."/>
            <person name="Hume D.A."/>
            <person name="Kai C."/>
            <person name="Sasaki D."/>
            <person name="Tomaru Y."/>
            <person name="Fukuda S."/>
            <person name="Kanamori-Katayama M."/>
            <person name="Suzuki M."/>
            <person name="Aoki J."/>
            <person name="Arakawa T."/>
            <person name="Iida J."/>
            <person name="Imamura K."/>
            <person name="Itoh M."/>
            <person name="Kato T."/>
            <person name="Kawaji H."/>
            <person name="Kawagashira N."/>
            <person name="Kawashima T."/>
            <person name="Kojima M."/>
            <person name="Kondo S."/>
            <person name="Konno H."/>
            <person name="Nakano K."/>
            <person name="Ninomiya N."/>
            <person name="Nishio T."/>
            <person name="Okada M."/>
            <person name="Plessy C."/>
            <person name="Shibata K."/>
            <person name="Shiraki T."/>
            <person name="Suzuki S."/>
            <person name="Tagami M."/>
            <person name="Waki K."/>
            <person name="Watahiki A."/>
            <person name="Okamura-Oho Y."/>
            <person name="Suzuki H."/>
            <person name="Kawai J."/>
            <person name="Hayashizaki Y."/>
        </authorList>
    </citation>
    <scope>NUCLEOTIDE SEQUENCE [LARGE SCALE MRNA]</scope>
    <source>
        <strain>C57BL/6J</strain>
        <tissue>Head</tissue>
    </source>
</reference>
<reference key="3">
    <citation type="journal article" date="2004" name="Genome Res.">
        <title>The status, quality, and expansion of the NIH full-length cDNA project: the Mammalian Gene Collection (MGC).</title>
        <authorList>
            <consortium name="The MGC Project Team"/>
        </authorList>
    </citation>
    <scope>NUCLEOTIDE SEQUENCE [LARGE SCALE MRNA]</scope>
    <source>
        <strain>C57BL/6J</strain>
        <strain>FVB/N</strain>
        <tissue>Brain</tissue>
        <tissue>Liver</tissue>
    </source>
</reference>
<reference key="4">
    <citation type="journal article" date="2010" name="Cell">
        <title>A tissue-specific atlas of mouse protein phosphorylation and expression.</title>
        <authorList>
            <person name="Huttlin E.L."/>
            <person name="Jedrychowski M.P."/>
            <person name="Elias J.E."/>
            <person name="Goswami T."/>
            <person name="Rad R."/>
            <person name="Beausoleil S.A."/>
            <person name="Villen J."/>
            <person name="Haas W."/>
            <person name="Sowa M.E."/>
            <person name="Gygi S.P."/>
        </authorList>
    </citation>
    <scope>IDENTIFICATION BY MASS SPECTROMETRY [LARGE SCALE ANALYSIS]</scope>
    <source>
        <tissue>Brown adipose tissue</tissue>
        <tissue>Kidney</tissue>
        <tissue>Liver</tissue>
        <tissue>Lung</tissue>
        <tissue>Pancreas</tissue>
        <tissue>Spleen</tissue>
        <tissue>Testis</tissue>
    </source>
</reference>
<feature type="chain" id="PRO_0000051271" description="Transducin beta-like protein 2">
    <location>
        <begin position="1"/>
        <end position="442"/>
    </location>
</feature>
<feature type="repeat" description="WD 1">
    <location>
        <begin position="84"/>
        <end position="123"/>
    </location>
</feature>
<feature type="repeat" description="WD 2">
    <location>
        <begin position="130"/>
        <end position="170"/>
    </location>
</feature>
<feature type="repeat" description="WD 3">
    <location>
        <begin position="182"/>
        <end position="222"/>
    </location>
</feature>
<feature type="repeat" description="WD 4">
    <location>
        <begin position="224"/>
        <end position="263"/>
    </location>
</feature>
<feature type="repeat" description="WD 5">
    <location>
        <begin position="273"/>
        <end position="312"/>
    </location>
</feature>
<feature type="repeat" description="WD 6">
    <location>
        <begin position="323"/>
        <end position="362"/>
    </location>
</feature>
<feature type="repeat" description="WD 7">
    <location>
        <begin position="366"/>
        <end position="404"/>
    </location>
</feature>
<feature type="region of interest" description="Disordered" evidence="2">
    <location>
        <begin position="36"/>
        <end position="71"/>
    </location>
</feature>
<feature type="compositionally biased region" description="Basic residues" evidence="2">
    <location>
        <begin position="52"/>
        <end position="65"/>
    </location>
</feature>
<feature type="modified residue" description="Phosphothreonine" evidence="1">
    <location>
        <position position="428"/>
    </location>
</feature>
<feature type="cross-link" description="Glycyl lysine isopeptide (Lys-Gly) (interchain with G-Cter in SUMO2)" evidence="1">
    <location>
        <position position="164"/>
    </location>
</feature>
<feature type="sequence conflict" description="In Ref. 1; AAF06825." evidence="3" ref="1">
    <original>T</original>
    <variation>S</variation>
    <location>
        <position position="156"/>
    </location>
</feature>
<feature type="sequence conflict" description="In Ref. 1; AAF06825." evidence="3" ref="1">
    <original>G</original>
    <variation>A</variation>
    <location>
        <position position="357"/>
    </location>
</feature>
<sequence length="442" mass="49584">MELPQMPELMGLSLLVGLLALVATAAVARGWLRAEEKPSQPVCQKENEPKKSGSKKQKQNQRVRKEKPQQHSFTHPLLAAALKSHSGNISCMDFSSNGKYLATCADDRTVRIWSTKDFLQREHRSMRANVELDHATLVRFSPDCRAFIVWLANGDTLRVFKMTKREDGGFTFTATPEDFPKKHKAPIINIGIADTGKFIMTASSDTTVLIWNLKGQVLSTINTNQMNNSHAVISPCSRFVGSCGFTPDVKVWEVCFGKKGEFQEVLRAFELKGHSASVHSFAFSNDSRRMASVSKDGTWKLWDTDVEYKKQQDPYLLRTGRFEEASTMPCRLALSPDTHVLALATGTNIHLFNTRRGEKEEYFECVHGECIADLTFDITGRFLASCGDRAVRLFHNTPGHRAVVEEMQSLLKRASSESTRQRLQQQLTQAQEALKSLGALKK</sequence>
<protein>
    <recommendedName>
        <fullName>Transducin beta-like protein 2</fullName>
    </recommendedName>
</protein>
<dbReference type="EMBL" id="AF097523">
    <property type="protein sequence ID" value="AAF06825.1"/>
    <property type="molecule type" value="mRNA"/>
</dbReference>
<dbReference type="EMBL" id="AK132366">
    <property type="protein sequence ID" value="BAE21128.1"/>
    <property type="molecule type" value="mRNA"/>
</dbReference>
<dbReference type="EMBL" id="AK165686">
    <property type="protein sequence ID" value="BAE38338.1"/>
    <property type="molecule type" value="mRNA"/>
</dbReference>
<dbReference type="EMBL" id="BC039273">
    <property type="protein sequence ID" value="AAH39273.1"/>
    <property type="molecule type" value="mRNA"/>
</dbReference>
<dbReference type="EMBL" id="BC048185">
    <property type="protein sequence ID" value="AAH48185.1"/>
    <property type="molecule type" value="mRNA"/>
</dbReference>
<dbReference type="CCDS" id="CCDS19735.1"/>
<dbReference type="RefSeq" id="NP_038791.2">
    <property type="nucleotide sequence ID" value="NM_013763.2"/>
</dbReference>
<dbReference type="SMR" id="Q9R099"/>
<dbReference type="BioGRID" id="205175">
    <property type="interactions" value="7"/>
</dbReference>
<dbReference type="FunCoup" id="Q9R099">
    <property type="interactions" value="1946"/>
</dbReference>
<dbReference type="IntAct" id="Q9R099">
    <property type="interactions" value="1"/>
</dbReference>
<dbReference type="STRING" id="10090.ENSMUSP00000115011"/>
<dbReference type="GlyGen" id="Q9R099">
    <property type="glycosylation" value="1 site, 1 O-linked glycan (1 site)"/>
</dbReference>
<dbReference type="iPTMnet" id="Q9R099"/>
<dbReference type="PhosphoSitePlus" id="Q9R099"/>
<dbReference type="SwissPalm" id="Q9R099"/>
<dbReference type="jPOST" id="Q9R099"/>
<dbReference type="PaxDb" id="10090-ENSMUSP00000115011"/>
<dbReference type="ProteomicsDB" id="254667"/>
<dbReference type="Pumba" id="Q9R099"/>
<dbReference type="Antibodypedia" id="2315">
    <property type="antibodies" value="192 antibodies from 27 providers"/>
</dbReference>
<dbReference type="DNASU" id="27368"/>
<dbReference type="Ensembl" id="ENSMUST00000153183.8">
    <property type="protein sequence ID" value="ENSMUSP00000115011.2"/>
    <property type="gene ID" value="ENSMUSG00000005374.14"/>
</dbReference>
<dbReference type="GeneID" id="27368"/>
<dbReference type="KEGG" id="mmu:27368"/>
<dbReference type="UCSC" id="uc008zxu.1">
    <property type="organism name" value="mouse"/>
</dbReference>
<dbReference type="AGR" id="MGI:1351652"/>
<dbReference type="CTD" id="26608"/>
<dbReference type="MGI" id="MGI:1351652">
    <property type="gene designation" value="Tbl2"/>
</dbReference>
<dbReference type="VEuPathDB" id="HostDB:ENSMUSG00000005374"/>
<dbReference type="eggNOG" id="KOG2096">
    <property type="taxonomic scope" value="Eukaryota"/>
</dbReference>
<dbReference type="GeneTree" id="ENSGT00390000013836"/>
<dbReference type="HOGENOM" id="CLU_047173_1_0_1"/>
<dbReference type="InParanoid" id="Q9R099"/>
<dbReference type="OMA" id="WDINVRY"/>
<dbReference type="OrthoDB" id="346371at2759"/>
<dbReference type="PhylomeDB" id="Q9R099"/>
<dbReference type="TreeFam" id="TF315054"/>
<dbReference type="BioGRID-ORCS" id="27368">
    <property type="hits" value="2 hits in 77 CRISPR screens"/>
</dbReference>
<dbReference type="CD-CODE" id="CE726F99">
    <property type="entry name" value="Postsynaptic density"/>
</dbReference>
<dbReference type="ChiTaRS" id="Tbl2">
    <property type="organism name" value="mouse"/>
</dbReference>
<dbReference type="PRO" id="PR:Q9R099"/>
<dbReference type="Proteomes" id="UP000000589">
    <property type="component" value="Chromosome 5"/>
</dbReference>
<dbReference type="RNAct" id="Q9R099">
    <property type="molecule type" value="protein"/>
</dbReference>
<dbReference type="Bgee" id="ENSMUSG00000005374">
    <property type="expression patterns" value="Expressed in spermatocyte and 237 other cell types or tissues"/>
</dbReference>
<dbReference type="ExpressionAtlas" id="Q9R099">
    <property type="expression patterns" value="baseline and differential"/>
</dbReference>
<dbReference type="GO" id="GO:0005783">
    <property type="term" value="C:endoplasmic reticulum"/>
    <property type="evidence" value="ECO:0007669"/>
    <property type="project" value="Ensembl"/>
</dbReference>
<dbReference type="GO" id="GO:0051219">
    <property type="term" value="F:phosphoprotein binding"/>
    <property type="evidence" value="ECO:0007669"/>
    <property type="project" value="Ensembl"/>
</dbReference>
<dbReference type="GO" id="GO:0019901">
    <property type="term" value="F:protein kinase binding"/>
    <property type="evidence" value="ECO:0007669"/>
    <property type="project" value="Ensembl"/>
</dbReference>
<dbReference type="GO" id="GO:0031369">
    <property type="term" value="F:translation initiation factor binding"/>
    <property type="evidence" value="ECO:0007669"/>
    <property type="project" value="Ensembl"/>
</dbReference>
<dbReference type="GO" id="GO:0042149">
    <property type="term" value="P:cellular response to glucose starvation"/>
    <property type="evidence" value="ECO:0007669"/>
    <property type="project" value="Ensembl"/>
</dbReference>
<dbReference type="GO" id="GO:0071456">
    <property type="term" value="P:cellular response to hypoxia"/>
    <property type="evidence" value="ECO:0007669"/>
    <property type="project" value="Ensembl"/>
</dbReference>
<dbReference type="GO" id="GO:0030968">
    <property type="term" value="P:endoplasmic reticulum unfolded protein response"/>
    <property type="evidence" value="ECO:0007669"/>
    <property type="project" value="Ensembl"/>
</dbReference>
<dbReference type="FunFam" id="2.130.10.10:FF:000659">
    <property type="entry name" value="Transducin beta-like protein 2"/>
    <property type="match status" value="1"/>
</dbReference>
<dbReference type="FunFam" id="2.130.10.10:FF:001285">
    <property type="entry name" value="Transducin beta-like protein 2"/>
    <property type="match status" value="1"/>
</dbReference>
<dbReference type="Gene3D" id="2.130.10.10">
    <property type="entry name" value="YVTN repeat-like/Quinoprotein amine dehydrogenase"/>
    <property type="match status" value="2"/>
</dbReference>
<dbReference type="InterPro" id="IPR020472">
    <property type="entry name" value="G-protein_beta_WD-40_rep"/>
</dbReference>
<dbReference type="InterPro" id="IPR042410">
    <property type="entry name" value="WBSCR13"/>
</dbReference>
<dbReference type="InterPro" id="IPR015943">
    <property type="entry name" value="WD40/YVTN_repeat-like_dom_sf"/>
</dbReference>
<dbReference type="InterPro" id="IPR019775">
    <property type="entry name" value="WD40_repeat_CS"/>
</dbReference>
<dbReference type="InterPro" id="IPR036322">
    <property type="entry name" value="WD40_repeat_dom_sf"/>
</dbReference>
<dbReference type="InterPro" id="IPR001680">
    <property type="entry name" value="WD40_rpt"/>
</dbReference>
<dbReference type="PANTHER" id="PTHR44321">
    <property type="entry name" value="TRANSDUCIN BETA-LIKE PROTEIN 2"/>
    <property type="match status" value="1"/>
</dbReference>
<dbReference type="PANTHER" id="PTHR44321:SF1">
    <property type="entry name" value="TRANSDUCIN BETA-LIKE PROTEIN 2"/>
    <property type="match status" value="1"/>
</dbReference>
<dbReference type="Pfam" id="PF00400">
    <property type="entry name" value="WD40"/>
    <property type="match status" value="4"/>
</dbReference>
<dbReference type="PRINTS" id="PR00320">
    <property type="entry name" value="GPROTEINBRPT"/>
</dbReference>
<dbReference type="SMART" id="SM00320">
    <property type="entry name" value="WD40"/>
    <property type="match status" value="5"/>
</dbReference>
<dbReference type="SUPFAM" id="SSF50978">
    <property type="entry name" value="WD40 repeat-like"/>
    <property type="match status" value="1"/>
</dbReference>
<dbReference type="PROSITE" id="PS00678">
    <property type="entry name" value="WD_REPEATS_1"/>
    <property type="match status" value="2"/>
</dbReference>
<dbReference type="PROSITE" id="PS50082">
    <property type="entry name" value="WD_REPEATS_2"/>
    <property type="match status" value="3"/>
</dbReference>
<dbReference type="PROSITE" id="PS50294">
    <property type="entry name" value="WD_REPEATS_REGION"/>
    <property type="match status" value="1"/>
</dbReference>
<evidence type="ECO:0000250" key="1">
    <source>
        <dbReference type="UniProtKB" id="Q9Y4P3"/>
    </source>
</evidence>
<evidence type="ECO:0000256" key="2">
    <source>
        <dbReference type="SAM" id="MobiDB-lite"/>
    </source>
</evidence>
<evidence type="ECO:0000305" key="3"/>
<gene>
    <name type="primary">Tbl2</name>
</gene>
<organism>
    <name type="scientific">Mus musculus</name>
    <name type="common">Mouse</name>
    <dbReference type="NCBI Taxonomy" id="10090"/>
    <lineage>
        <taxon>Eukaryota</taxon>
        <taxon>Metazoa</taxon>
        <taxon>Chordata</taxon>
        <taxon>Craniata</taxon>
        <taxon>Vertebrata</taxon>
        <taxon>Euteleostomi</taxon>
        <taxon>Mammalia</taxon>
        <taxon>Eutheria</taxon>
        <taxon>Euarchontoglires</taxon>
        <taxon>Glires</taxon>
        <taxon>Rodentia</taxon>
        <taxon>Myomorpha</taxon>
        <taxon>Muroidea</taxon>
        <taxon>Muridae</taxon>
        <taxon>Murinae</taxon>
        <taxon>Mus</taxon>
        <taxon>Mus</taxon>
    </lineage>
</organism>
<name>TBL2_MOUSE</name>
<accession>Q9R099</accession>
<accession>Q8CFY0</accession>
<keyword id="KW-1017">Isopeptide bond</keyword>
<keyword id="KW-0597">Phosphoprotein</keyword>
<keyword id="KW-1185">Reference proteome</keyword>
<keyword id="KW-0677">Repeat</keyword>
<keyword id="KW-0832">Ubl conjugation</keyword>
<keyword id="KW-0853">WD repeat</keyword>